<evidence type="ECO:0000255" key="1">
    <source>
        <dbReference type="HAMAP-Rule" id="MF_01705"/>
    </source>
</evidence>
<evidence type="ECO:0000255" key="2">
    <source>
        <dbReference type="PROSITE-ProRule" id="PRU01213"/>
    </source>
</evidence>
<evidence type="ECO:0000305" key="3"/>
<gene>
    <name evidence="1" type="primary">modC1</name>
    <name type="ordered locus">bll1780</name>
</gene>
<reference key="1">
    <citation type="journal article" date="2001" name="J. Bacteriol.">
        <title>Potential symbiosis-specific genes uncovered by sequencing a 410-kb DNA region of the Bradyrhizobium japonicum chromosome.</title>
        <authorList>
            <person name="Goettfert M."/>
            <person name="Roethlisberger S."/>
            <person name="Kuendig C."/>
            <person name="Beck C."/>
            <person name="Marty R."/>
            <person name="Hennecke H."/>
        </authorList>
    </citation>
    <scope>NUCLEOTIDE SEQUENCE [GENOMIC DNA]</scope>
    <source>
        <strain>USDA 110spc4</strain>
    </source>
</reference>
<reference key="2">
    <citation type="journal article" date="2002" name="DNA Res.">
        <title>Complete genomic sequence of nitrogen-fixing symbiotic bacterium Bradyrhizobium japonicum USDA110.</title>
        <authorList>
            <person name="Kaneko T."/>
            <person name="Nakamura Y."/>
            <person name="Sato S."/>
            <person name="Minamisawa K."/>
            <person name="Uchiumi T."/>
            <person name="Sasamoto S."/>
            <person name="Watanabe A."/>
            <person name="Idesawa K."/>
            <person name="Iriguchi M."/>
            <person name="Kawashima K."/>
            <person name="Kohara M."/>
            <person name="Matsumoto M."/>
            <person name="Shimpo S."/>
            <person name="Tsuruoka H."/>
            <person name="Wada T."/>
            <person name="Yamada M."/>
            <person name="Tabata S."/>
        </authorList>
    </citation>
    <scope>NUCLEOTIDE SEQUENCE [LARGE SCALE GENOMIC DNA]</scope>
    <source>
        <strain>JCM 10833 / BCRC 13528 / IAM 13628 / NBRC 14792 / USDA 110</strain>
    </source>
</reference>
<keyword id="KW-0067">ATP-binding</keyword>
<keyword id="KW-0997">Cell inner membrane</keyword>
<keyword id="KW-1003">Cell membrane</keyword>
<keyword id="KW-0472">Membrane</keyword>
<keyword id="KW-0500">Molybdenum</keyword>
<keyword id="KW-0547">Nucleotide-binding</keyword>
<keyword id="KW-1185">Reference proteome</keyword>
<keyword id="KW-1278">Translocase</keyword>
<keyword id="KW-0813">Transport</keyword>
<comment type="function">
    <text evidence="1">Part of the ABC transporter complex ModABC involved in molybdenum import. Responsible for energy coupling to the transport system.</text>
</comment>
<comment type="catalytic activity">
    <reaction evidence="1">
        <text>molybdate(out) + ATP + H2O = molybdate(in) + ADP + phosphate + H(+)</text>
        <dbReference type="Rhea" id="RHEA:22020"/>
        <dbReference type="ChEBI" id="CHEBI:15377"/>
        <dbReference type="ChEBI" id="CHEBI:15378"/>
        <dbReference type="ChEBI" id="CHEBI:30616"/>
        <dbReference type="ChEBI" id="CHEBI:36264"/>
        <dbReference type="ChEBI" id="CHEBI:43474"/>
        <dbReference type="ChEBI" id="CHEBI:456216"/>
        <dbReference type="EC" id="7.3.2.5"/>
    </reaction>
</comment>
<comment type="subunit">
    <text evidence="1">The complex is composed of two ATP-binding proteins (ModC), two transmembrane proteins (ModB) and a solute-binding protein (ModA).</text>
</comment>
<comment type="subcellular location">
    <subcellularLocation>
        <location evidence="1">Cell inner membrane</location>
        <topology evidence="1">Peripheral membrane protein</topology>
    </subcellularLocation>
</comment>
<comment type="similarity">
    <text evidence="1">Belongs to the ABC transporter superfamily. Molybdate importer (TC 3.A.1.8) family.</text>
</comment>
<comment type="sequence caution" evidence="3">
    <conflict type="erroneous initiation">
        <sequence resource="EMBL-CDS" id="BAC47045"/>
    </conflict>
</comment>
<dbReference type="EC" id="7.3.2.5" evidence="1"/>
<dbReference type="EMBL" id="AH010242">
    <property type="protein sequence ID" value="AAG60764.1"/>
    <property type="molecule type" value="Genomic_DNA"/>
</dbReference>
<dbReference type="EMBL" id="BA000040">
    <property type="protein sequence ID" value="BAC47045.1"/>
    <property type="status" value="ALT_INIT"/>
    <property type="molecule type" value="Genomic_DNA"/>
</dbReference>
<dbReference type="RefSeq" id="NP_768420.1">
    <property type="nucleotide sequence ID" value="NC_004463.1"/>
</dbReference>
<dbReference type="SMR" id="Q89TQ9"/>
<dbReference type="STRING" id="224911.AAV28_05825"/>
<dbReference type="EnsemblBacteria" id="BAC47045">
    <property type="protein sequence ID" value="BAC47045"/>
    <property type="gene ID" value="BAC47045"/>
</dbReference>
<dbReference type="KEGG" id="bja:bll1780"/>
<dbReference type="PATRIC" id="fig|224911.44.peg.1249"/>
<dbReference type="eggNOG" id="COG4148">
    <property type="taxonomic scope" value="Bacteria"/>
</dbReference>
<dbReference type="HOGENOM" id="CLU_000604_1_1_5"/>
<dbReference type="InParanoid" id="Q89TQ9"/>
<dbReference type="OrthoDB" id="9802264at2"/>
<dbReference type="Proteomes" id="UP000002526">
    <property type="component" value="Chromosome"/>
</dbReference>
<dbReference type="GO" id="GO:0005886">
    <property type="term" value="C:plasma membrane"/>
    <property type="evidence" value="ECO:0007669"/>
    <property type="project" value="UniProtKB-SubCell"/>
</dbReference>
<dbReference type="GO" id="GO:0015412">
    <property type="term" value="F:ABC-type molybdate transporter activity"/>
    <property type="evidence" value="ECO:0007669"/>
    <property type="project" value="UniProtKB-EC"/>
</dbReference>
<dbReference type="GO" id="GO:0005524">
    <property type="term" value="F:ATP binding"/>
    <property type="evidence" value="ECO:0007669"/>
    <property type="project" value="UniProtKB-KW"/>
</dbReference>
<dbReference type="GO" id="GO:0016887">
    <property type="term" value="F:ATP hydrolysis activity"/>
    <property type="evidence" value="ECO:0007669"/>
    <property type="project" value="InterPro"/>
</dbReference>
<dbReference type="Gene3D" id="2.40.50.100">
    <property type="match status" value="1"/>
</dbReference>
<dbReference type="Gene3D" id="3.40.50.300">
    <property type="entry name" value="P-loop containing nucleotide triphosphate hydrolases"/>
    <property type="match status" value="1"/>
</dbReference>
<dbReference type="InterPro" id="IPR003593">
    <property type="entry name" value="AAA+_ATPase"/>
</dbReference>
<dbReference type="InterPro" id="IPR003439">
    <property type="entry name" value="ABC_transporter-like_ATP-bd"/>
</dbReference>
<dbReference type="InterPro" id="IPR008995">
    <property type="entry name" value="Mo/tungstate-bd_C_term_dom"/>
</dbReference>
<dbReference type="InterPro" id="IPR011868">
    <property type="entry name" value="ModC_ABC_ATP-bd"/>
</dbReference>
<dbReference type="InterPro" id="IPR050334">
    <property type="entry name" value="Molybdenum_import_ModC"/>
</dbReference>
<dbReference type="InterPro" id="IPR004606">
    <property type="entry name" value="Mop_domain"/>
</dbReference>
<dbReference type="InterPro" id="IPR027417">
    <property type="entry name" value="P-loop_NTPase"/>
</dbReference>
<dbReference type="InterPro" id="IPR005116">
    <property type="entry name" value="Transp-assoc_OB_typ1"/>
</dbReference>
<dbReference type="NCBIfam" id="TIGR02142">
    <property type="entry name" value="modC_ABC"/>
    <property type="match status" value="1"/>
</dbReference>
<dbReference type="PANTHER" id="PTHR43514">
    <property type="entry name" value="ABC TRANSPORTER I FAMILY MEMBER 10"/>
    <property type="match status" value="1"/>
</dbReference>
<dbReference type="PANTHER" id="PTHR43514:SF10">
    <property type="entry name" value="MOLYBDENUM IMPORT ATP-BINDING PROTEIN MODC 2"/>
    <property type="match status" value="1"/>
</dbReference>
<dbReference type="Pfam" id="PF00005">
    <property type="entry name" value="ABC_tran"/>
    <property type="match status" value="1"/>
</dbReference>
<dbReference type="Pfam" id="PF03459">
    <property type="entry name" value="TOBE"/>
    <property type="match status" value="1"/>
</dbReference>
<dbReference type="SMART" id="SM00382">
    <property type="entry name" value="AAA"/>
    <property type="match status" value="1"/>
</dbReference>
<dbReference type="SUPFAM" id="SSF50331">
    <property type="entry name" value="MOP-like"/>
    <property type="match status" value="1"/>
</dbReference>
<dbReference type="SUPFAM" id="SSF52540">
    <property type="entry name" value="P-loop containing nucleoside triphosphate hydrolases"/>
    <property type="match status" value="1"/>
</dbReference>
<dbReference type="PROSITE" id="PS50893">
    <property type="entry name" value="ABC_TRANSPORTER_2"/>
    <property type="match status" value="1"/>
</dbReference>
<dbReference type="PROSITE" id="PS51241">
    <property type="entry name" value="MODC"/>
    <property type="match status" value="1"/>
</dbReference>
<dbReference type="PROSITE" id="PS51866">
    <property type="entry name" value="MOP"/>
    <property type="match status" value="1"/>
</dbReference>
<accession>Q89TQ9</accession>
<accession>Q9ANK6</accession>
<proteinExistence type="inferred from homology"/>
<name>MODC1_BRADU</name>
<feature type="chain" id="PRO_0000092533" description="Molybdenum import ATP-binding protein ModC 1">
    <location>
        <begin position="1"/>
        <end position="369"/>
    </location>
</feature>
<feature type="domain" description="ABC transporter" evidence="1">
    <location>
        <begin position="10"/>
        <end position="240"/>
    </location>
</feature>
<feature type="domain" description="Mop" evidence="2">
    <location>
        <begin position="297"/>
        <end position="367"/>
    </location>
</feature>
<feature type="binding site" evidence="1">
    <location>
        <begin position="42"/>
        <end position="49"/>
    </location>
    <ligand>
        <name>ATP</name>
        <dbReference type="ChEBI" id="CHEBI:30616"/>
    </ligand>
</feature>
<protein>
    <recommendedName>
        <fullName evidence="1">Molybdenum import ATP-binding protein ModC 1</fullName>
        <ecNumber evidence="1">7.3.2.5</ecNumber>
    </recommendedName>
</protein>
<organism>
    <name type="scientific">Bradyrhizobium diazoefficiens (strain JCM 10833 / BCRC 13528 / IAM 13628 / NBRC 14792 / USDA 110)</name>
    <dbReference type="NCBI Taxonomy" id="224911"/>
    <lineage>
        <taxon>Bacteria</taxon>
        <taxon>Pseudomonadati</taxon>
        <taxon>Pseudomonadota</taxon>
        <taxon>Alphaproteobacteria</taxon>
        <taxon>Hyphomicrobiales</taxon>
        <taxon>Nitrobacteraceae</taxon>
        <taxon>Bradyrhizobium</taxon>
    </lineage>
</organism>
<sequence length="369" mass="39965">MGGFTKEAKKGYIEVAFNGSLASILLDTQFSVPAKGVTAIFGPPGCGKTTLARCIAGVQRLPNGFCAIDGEIWQDETTFRPPHLRRVAYVFQLPILSSHLSVRRTLLYNASNSEPTLIDFDGVVELLGLAPLLERTPSHLSKTERQRLALGSALLGQPRLLLLDDPLIVRDRSAKCEILPFLERILQSLALPMIYISHDITDIERLADHLVMMKDGTVTAAGPLNVTQSDPALASRSEAAICLDTMVGGYDGRYGLVKLRLKSARFLIPAVPLRPGARLRLRIAAGDVSIACEPPRASSILNVFRARITASLPHGDAEVTLVLTLETGHSGVPLLARITRRSFDALRLSIGAEVFAEELCGKLGDDGMR</sequence>